<sequence>MPSLSKEAALVHDALVARGLETPLRPPMDELDNETRKSLIAGHMTEIMQLLNLDLSDDSLMETPHRIAKMYVDEIFAGLDYANFPKITLIENKMKVDEMVTVRDITLTSTCEHHFVTIDGKATVAYIPKDSVIGLSKINRIVQFFAQRPQVQERLTQQILTALQTLLGTNNVAVSIDAVHYCVKARGIRDATSATTTTSLGGLFKSSQNTRQEFLRAVRHHP</sequence>
<dbReference type="EC" id="3.5.4.16" evidence="1"/>
<dbReference type="EMBL" id="CP001127">
    <property type="protein sequence ID" value="ACF92059.1"/>
    <property type="molecule type" value="Genomic_DNA"/>
</dbReference>
<dbReference type="RefSeq" id="WP_001139611.1">
    <property type="nucleotide sequence ID" value="NC_011094.1"/>
</dbReference>
<dbReference type="SMR" id="B4TNQ0"/>
<dbReference type="KEGG" id="sew:SeSA_A2432"/>
<dbReference type="HOGENOM" id="CLU_049768_3_2_6"/>
<dbReference type="UniPathway" id="UPA00848">
    <property type="reaction ID" value="UER00151"/>
</dbReference>
<dbReference type="Proteomes" id="UP000001865">
    <property type="component" value="Chromosome"/>
</dbReference>
<dbReference type="GO" id="GO:0005737">
    <property type="term" value="C:cytoplasm"/>
    <property type="evidence" value="ECO:0007669"/>
    <property type="project" value="TreeGrafter"/>
</dbReference>
<dbReference type="GO" id="GO:0005525">
    <property type="term" value="F:GTP binding"/>
    <property type="evidence" value="ECO:0007669"/>
    <property type="project" value="UniProtKB-KW"/>
</dbReference>
<dbReference type="GO" id="GO:0003934">
    <property type="term" value="F:GTP cyclohydrolase I activity"/>
    <property type="evidence" value="ECO:0007669"/>
    <property type="project" value="UniProtKB-UniRule"/>
</dbReference>
<dbReference type="GO" id="GO:0008270">
    <property type="term" value="F:zinc ion binding"/>
    <property type="evidence" value="ECO:0007669"/>
    <property type="project" value="UniProtKB-UniRule"/>
</dbReference>
<dbReference type="GO" id="GO:0006730">
    <property type="term" value="P:one-carbon metabolic process"/>
    <property type="evidence" value="ECO:0007669"/>
    <property type="project" value="UniProtKB-UniRule"/>
</dbReference>
<dbReference type="GO" id="GO:0006729">
    <property type="term" value="P:tetrahydrobiopterin biosynthetic process"/>
    <property type="evidence" value="ECO:0007669"/>
    <property type="project" value="TreeGrafter"/>
</dbReference>
<dbReference type="GO" id="GO:0046654">
    <property type="term" value="P:tetrahydrofolate biosynthetic process"/>
    <property type="evidence" value="ECO:0007669"/>
    <property type="project" value="UniProtKB-UniRule"/>
</dbReference>
<dbReference type="CDD" id="cd00642">
    <property type="entry name" value="GTP_cyclohydro1"/>
    <property type="match status" value="1"/>
</dbReference>
<dbReference type="FunFam" id="1.10.286.10:FF:000002">
    <property type="entry name" value="GTP cyclohydrolase 1"/>
    <property type="match status" value="1"/>
</dbReference>
<dbReference type="FunFam" id="3.30.1130.10:FF:000001">
    <property type="entry name" value="GTP cyclohydrolase 1"/>
    <property type="match status" value="1"/>
</dbReference>
<dbReference type="Gene3D" id="1.10.286.10">
    <property type="match status" value="1"/>
</dbReference>
<dbReference type="Gene3D" id="3.30.1130.10">
    <property type="match status" value="1"/>
</dbReference>
<dbReference type="HAMAP" id="MF_00223">
    <property type="entry name" value="FolE"/>
    <property type="match status" value="1"/>
</dbReference>
<dbReference type="InterPro" id="IPR043133">
    <property type="entry name" value="GTP-CH-I_C/QueF"/>
</dbReference>
<dbReference type="InterPro" id="IPR043134">
    <property type="entry name" value="GTP-CH-I_N"/>
</dbReference>
<dbReference type="InterPro" id="IPR001474">
    <property type="entry name" value="GTP_CycHdrlase_I"/>
</dbReference>
<dbReference type="InterPro" id="IPR018234">
    <property type="entry name" value="GTP_CycHdrlase_I_CS"/>
</dbReference>
<dbReference type="InterPro" id="IPR020602">
    <property type="entry name" value="GTP_CycHdrlase_I_dom"/>
</dbReference>
<dbReference type="NCBIfam" id="TIGR00063">
    <property type="entry name" value="folE"/>
    <property type="match status" value="1"/>
</dbReference>
<dbReference type="NCBIfam" id="NF006824">
    <property type="entry name" value="PRK09347.1-1"/>
    <property type="match status" value="1"/>
</dbReference>
<dbReference type="NCBIfam" id="NF006825">
    <property type="entry name" value="PRK09347.1-2"/>
    <property type="match status" value="1"/>
</dbReference>
<dbReference type="NCBIfam" id="NF006826">
    <property type="entry name" value="PRK09347.1-3"/>
    <property type="match status" value="1"/>
</dbReference>
<dbReference type="PANTHER" id="PTHR11109:SF7">
    <property type="entry name" value="GTP CYCLOHYDROLASE 1"/>
    <property type="match status" value="1"/>
</dbReference>
<dbReference type="PANTHER" id="PTHR11109">
    <property type="entry name" value="GTP CYCLOHYDROLASE I"/>
    <property type="match status" value="1"/>
</dbReference>
<dbReference type="Pfam" id="PF01227">
    <property type="entry name" value="GTP_cyclohydroI"/>
    <property type="match status" value="1"/>
</dbReference>
<dbReference type="SUPFAM" id="SSF55620">
    <property type="entry name" value="Tetrahydrobiopterin biosynthesis enzymes-like"/>
    <property type="match status" value="1"/>
</dbReference>
<dbReference type="PROSITE" id="PS00859">
    <property type="entry name" value="GTP_CYCLOHYDROL_1_1"/>
    <property type="match status" value="1"/>
</dbReference>
<dbReference type="PROSITE" id="PS00860">
    <property type="entry name" value="GTP_CYCLOHYDROL_1_2"/>
    <property type="match status" value="1"/>
</dbReference>
<gene>
    <name evidence="1" type="primary">folE</name>
    <name type="ordered locus">SeSA_A2432</name>
</gene>
<name>GCH1_SALSV</name>
<evidence type="ECO:0000255" key="1">
    <source>
        <dbReference type="HAMAP-Rule" id="MF_00223"/>
    </source>
</evidence>
<proteinExistence type="inferred from homology"/>
<organism>
    <name type="scientific">Salmonella schwarzengrund (strain CVM19633)</name>
    <dbReference type="NCBI Taxonomy" id="439843"/>
    <lineage>
        <taxon>Bacteria</taxon>
        <taxon>Pseudomonadati</taxon>
        <taxon>Pseudomonadota</taxon>
        <taxon>Gammaproteobacteria</taxon>
        <taxon>Enterobacterales</taxon>
        <taxon>Enterobacteriaceae</taxon>
        <taxon>Salmonella</taxon>
    </lineage>
</organism>
<accession>B4TNQ0</accession>
<protein>
    <recommendedName>
        <fullName evidence="1">GTP cyclohydrolase 1</fullName>
        <ecNumber evidence="1">3.5.4.16</ecNumber>
    </recommendedName>
    <alternativeName>
        <fullName evidence="1">GTP cyclohydrolase I</fullName>
        <shortName evidence="1">GTP-CH-I</shortName>
    </alternativeName>
</protein>
<feature type="chain" id="PRO_1000100197" description="GTP cyclohydrolase 1">
    <location>
        <begin position="1"/>
        <end position="222"/>
    </location>
</feature>
<feature type="binding site" evidence="1">
    <location>
        <position position="111"/>
    </location>
    <ligand>
        <name>Zn(2+)</name>
        <dbReference type="ChEBI" id="CHEBI:29105"/>
    </ligand>
</feature>
<feature type="binding site" evidence="1">
    <location>
        <position position="114"/>
    </location>
    <ligand>
        <name>Zn(2+)</name>
        <dbReference type="ChEBI" id="CHEBI:29105"/>
    </ligand>
</feature>
<feature type="binding site" evidence="1">
    <location>
        <position position="182"/>
    </location>
    <ligand>
        <name>Zn(2+)</name>
        <dbReference type="ChEBI" id="CHEBI:29105"/>
    </ligand>
</feature>
<reference key="1">
    <citation type="journal article" date="2011" name="J. Bacteriol.">
        <title>Comparative genomics of 28 Salmonella enterica isolates: evidence for CRISPR-mediated adaptive sublineage evolution.</title>
        <authorList>
            <person name="Fricke W.F."/>
            <person name="Mammel M.K."/>
            <person name="McDermott P.F."/>
            <person name="Tartera C."/>
            <person name="White D.G."/>
            <person name="Leclerc J.E."/>
            <person name="Ravel J."/>
            <person name="Cebula T.A."/>
        </authorList>
    </citation>
    <scope>NUCLEOTIDE SEQUENCE [LARGE SCALE GENOMIC DNA]</scope>
    <source>
        <strain>CVM19633</strain>
    </source>
</reference>
<comment type="catalytic activity">
    <reaction evidence="1">
        <text>GTP + H2O = 7,8-dihydroneopterin 3'-triphosphate + formate + H(+)</text>
        <dbReference type="Rhea" id="RHEA:17473"/>
        <dbReference type="ChEBI" id="CHEBI:15377"/>
        <dbReference type="ChEBI" id="CHEBI:15378"/>
        <dbReference type="ChEBI" id="CHEBI:15740"/>
        <dbReference type="ChEBI" id="CHEBI:37565"/>
        <dbReference type="ChEBI" id="CHEBI:58462"/>
        <dbReference type="EC" id="3.5.4.16"/>
    </reaction>
</comment>
<comment type="pathway">
    <text evidence="1">Cofactor biosynthesis; 7,8-dihydroneopterin triphosphate biosynthesis; 7,8-dihydroneopterin triphosphate from GTP: step 1/1.</text>
</comment>
<comment type="subunit">
    <text evidence="1">Homomer.</text>
</comment>
<comment type="similarity">
    <text evidence="1">Belongs to the GTP cyclohydrolase I family.</text>
</comment>
<keyword id="KW-0342">GTP-binding</keyword>
<keyword id="KW-0378">Hydrolase</keyword>
<keyword id="KW-0479">Metal-binding</keyword>
<keyword id="KW-0547">Nucleotide-binding</keyword>
<keyword id="KW-0554">One-carbon metabolism</keyword>
<keyword id="KW-0862">Zinc</keyword>